<reference key="1">
    <citation type="journal article" date="1992" name="Mol. Gen. Genet.">
        <title>Molecular cloning of the imidazoleglycerolphosphate dehydratase gene of Trichoderma harzianum by genetic complementation in Saccharomyces cerevisiae using a direct expression vector.</title>
        <authorList>
            <person name="Goldman G.H."/>
            <person name="Demolder J."/>
            <person name="Dewaele S."/>
            <person name="Herrera-Estrella A."/>
            <person name="Geremia R.A."/>
            <person name="van Montagu M."/>
            <person name="Contreras R."/>
        </authorList>
    </citation>
    <scope>NUCLEOTIDE SEQUENCE [MRNA]</scope>
</reference>
<comment type="catalytic activity">
    <reaction>
        <text>D-erythro-1-(imidazol-4-yl)glycerol 3-phosphate = 3-(imidazol-4-yl)-2-oxopropyl phosphate + H2O</text>
        <dbReference type="Rhea" id="RHEA:11040"/>
        <dbReference type="ChEBI" id="CHEBI:15377"/>
        <dbReference type="ChEBI" id="CHEBI:57766"/>
        <dbReference type="ChEBI" id="CHEBI:58278"/>
        <dbReference type="EC" id="4.2.1.19"/>
    </reaction>
</comment>
<comment type="pathway">
    <text>Amino-acid biosynthesis; L-histidine biosynthesis; L-histidine from 5-phospho-alpha-D-ribose 1-diphosphate: step 6/9.</text>
</comment>
<comment type="similarity">
    <text evidence="1">Belongs to the imidazoleglycerol-phosphate dehydratase family.</text>
</comment>
<accession>P34041</accession>
<sequence>MASPLPVRAAALSRDTNETSIQIALSIDGGELPQDADPRLLEASSAHASQTSKSQVISINTGIGFLDHMLHALAKHAGWSMALNCKGDLHIDDHHTAEDCCIAVGTTFAKALGALTGVARFGYAYAPLDEALSRAVVDLSNRPYTVVDLGLKREKLGELSCEMIPHCLQSFAQAARITLHVDCLRGDNDHHRAESAFKALAVAVRWYD</sequence>
<proteinExistence type="evidence at transcript level"/>
<organism>
    <name type="scientific">Trichoderma harzianum</name>
    <name type="common">Hypocrea lixii</name>
    <dbReference type="NCBI Taxonomy" id="5544"/>
    <lineage>
        <taxon>Eukaryota</taxon>
        <taxon>Fungi</taxon>
        <taxon>Dikarya</taxon>
        <taxon>Ascomycota</taxon>
        <taxon>Pezizomycotina</taxon>
        <taxon>Sordariomycetes</taxon>
        <taxon>Hypocreomycetidae</taxon>
        <taxon>Hypocreales</taxon>
        <taxon>Hypocreaceae</taxon>
        <taxon>Trichoderma</taxon>
    </lineage>
</organism>
<protein>
    <recommendedName>
        <fullName>Imidazoleglycerol-phosphate dehydratase</fullName>
        <shortName>IGPD</shortName>
        <ecNumber>4.2.1.19</ecNumber>
    </recommendedName>
</protein>
<name>HIS7_TRIHA</name>
<keyword id="KW-0028">Amino-acid biosynthesis</keyword>
<keyword id="KW-0368">Histidine biosynthesis</keyword>
<keyword id="KW-0456">Lyase</keyword>
<gene>
    <name type="primary">his3</name>
    <name type="synonym">igh</name>
</gene>
<dbReference type="EC" id="4.2.1.19"/>
<dbReference type="EMBL" id="Z11528">
    <property type="protein sequence ID" value="CAA77617.1"/>
    <property type="molecule type" value="mRNA"/>
</dbReference>
<dbReference type="PIR" id="S26196">
    <property type="entry name" value="S26196"/>
</dbReference>
<dbReference type="SMR" id="P34041"/>
<dbReference type="UniPathway" id="UPA00031">
    <property type="reaction ID" value="UER00011"/>
</dbReference>
<dbReference type="GO" id="GO:0004424">
    <property type="term" value="F:imidazoleglycerol-phosphate dehydratase activity"/>
    <property type="evidence" value="ECO:0007669"/>
    <property type="project" value="UniProtKB-EC"/>
</dbReference>
<dbReference type="GO" id="GO:0000105">
    <property type="term" value="P:L-histidine biosynthetic process"/>
    <property type="evidence" value="ECO:0007669"/>
    <property type="project" value="UniProtKB-UniPathway"/>
</dbReference>
<dbReference type="CDD" id="cd07914">
    <property type="entry name" value="IGPD"/>
    <property type="match status" value="1"/>
</dbReference>
<dbReference type="FunFam" id="3.30.230.40:FF:000005">
    <property type="entry name" value="Imidazoleglycerol-phosphate dehydratase"/>
    <property type="match status" value="1"/>
</dbReference>
<dbReference type="FunFam" id="3.30.230.40:FF:000001">
    <property type="entry name" value="Imidazoleglycerol-phosphate dehydratase HisB"/>
    <property type="match status" value="1"/>
</dbReference>
<dbReference type="Gene3D" id="3.30.230.40">
    <property type="entry name" value="Imidazole glycerol phosphate dehydratase, domain 1"/>
    <property type="match status" value="2"/>
</dbReference>
<dbReference type="HAMAP" id="MF_00076">
    <property type="entry name" value="HisB"/>
    <property type="match status" value="1"/>
</dbReference>
<dbReference type="InterPro" id="IPR038494">
    <property type="entry name" value="IGPD_sf"/>
</dbReference>
<dbReference type="InterPro" id="IPR000807">
    <property type="entry name" value="ImidazoleglycerolP_deHydtase"/>
</dbReference>
<dbReference type="InterPro" id="IPR020565">
    <property type="entry name" value="ImidazoleglycerP_deHydtase_CS"/>
</dbReference>
<dbReference type="InterPro" id="IPR020568">
    <property type="entry name" value="Ribosomal_Su5_D2-typ_SF"/>
</dbReference>
<dbReference type="PANTHER" id="PTHR23133:SF2">
    <property type="entry name" value="IMIDAZOLEGLYCEROL-PHOSPHATE DEHYDRATASE"/>
    <property type="match status" value="1"/>
</dbReference>
<dbReference type="PANTHER" id="PTHR23133">
    <property type="entry name" value="IMIDAZOLEGLYCEROL-PHOSPHATE DEHYDRATASE HIS7"/>
    <property type="match status" value="1"/>
</dbReference>
<dbReference type="Pfam" id="PF00475">
    <property type="entry name" value="IGPD"/>
    <property type="match status" value="1"/>
</dbReference>
<dbReference type="SUPFAM" id="SSF54211">
    <property type="entry name" value="Ribosomal protein S5 domain 2-like"/>
    <property type="match status" value="2"/>
</dbReference>
<dbReference type="PROSITE" id="PS00954">
    <property type="entry name" value="IGP_DEHYDRATASE_1"/>
    <property type="match status" value="1"/>
</dbReference>
<dbReference type="PROSITE" id="PS00955">
    <property type="entry name" value="IGP_DEHYDRATASE_2"/>
    <property type="match status" value="1"/>
</dbReference>
<evidence type="ECO:0000305" key="1"/>
<feature type="chain" id="PRO_0000158249" description="Imidazoleglycerol-phosphate dehydratase">
    <location>
        <begin position="1"/>
        <end position="208"/>
    </location>
</feature>